<keyword id="KW-1185">Reference proteome</keyword>
<keyword id="KW-0687">Ribonucleoprotein</keyword>
<keyword id="KW-0689">Ribosomal protein</keyword>
<keyword id="KW-0694">RNA-binding</keyword>
<keyword id="KW-0699">rRNA-binding</keyword>
<feature type="chain" id="PRO_0000176654" description="Large ribosomal subunit protein bL9">
    <location>
        <begin position="1"/>
        <end position="150"/>
    </location>
</feature>
<organism>
    <name type="scientific">Mycoplasmopsis pulmonis (strain UAB CTIP)</name>
    <name type="common">Mycoplasma pulmonis</name>
    <dbReference type="NCBI Taxonomy" id="272635"/>
    <lineage>
        <taxon>Bacteria</taxon>
        <taxon>Bacillati</taxon>
        <taxon>Mycoplasmatota</taxon>
        <taxon>Mycoplasmoidales</taxon>
        <taxon>Metamycoplasmataceae</taxon>
        <taxon>Mycoplasmopsis</taxon>
    </lineage>
</organism>
<proteinExistence type="inferred from homology"/>
<comment type="function">
    <text evidence="1">Binds to the 23S rRNA.</text>
</comment>
<comment type="similarity">
    <text evidence="1">Belongs to the bacterial ribosomal protein bL9 family.</text>
</comment>
<comment type="sequence caution" evidence="2">
    <conflict type="erroneous initiation">
        <sequence resource="EMBL-CDS" id="CAC13689"/>
    </conflict>
</comment>
<accession>Q98Q52</accession>
<name>RL9_MYCPU</name>
<dbReference type="EMBL" id="AL445564">
    <property type="protein sequence ID" value="CAC13689.1"/>
    <property type="status" value="ALT_INIT"/>
    <property type="molecule type" value="Genomic_DNA"/>
</dbReference>
<dbReference type="PIR" id="D90576">
    <property type="entry name" value="D90576"/>
</dbReference>
<dbReference type="RefSeq" id="WP_041364138.1">
    <property type="nucleotide sequence ID" value="NC_002771.1"/>
</dbReference>
<dbReference type="SMR" id="Q98Q52"/>
<dbReference type="STRING" id="272635.gene:17577118"/>
<dbReference type="KEGG" id="mpu:MYPU_5160"/>
<dbReference type="eggNOG" id="COG0359">
    <property type="taxonomic scope" value="Bacteria"/>
</dbReference>
<dbReference type="HOGENOM" id="CLU_078938_3_1_14"/>
<dbReference type="BioCyc" id="MPUL272635:G1GT6-522-MONOMER"/>
<dbReference type="Proteomes" id="UP000000528">
    <property type="component" value="Chromosome"/>
</dbReference>
<dbReference type="GO" id="GO:1990904">
    <property type="term" value="C:ribonucleoprotein complex"/>
    <property type="evidence" value="ECO:0007669"/>
    <property type="project" value="UniProtKB-KW"/>
</dbReference>
<dbReference type="GO" id="GO:0005840">
    <property type="term" value="C:ribosome"/>
    <property type="evidence" value="ECO:0007669"/>
    <property type="project" value="UniProtKB-KW"/>
</dbReference>
<dbReference type="GO" id="GO:0019843">
    <property type="term" value="F:rRNA binding"/>
    <property type="evidence" value="ECO:0007669"/>
    <property type="project" value="UniProtKB-UniRule"/>
</dbReference>
<dbReference type="GO" id="GO:0003735">
    <property type="term" value="F:structural constituent of ribosome"/>
    <property type="evidence" value="ECO:0007669"/>
    <property type="project" value="InterPro"/>
</dbReference>
<dbReference type="GO" id="GO:0006412">
    <property type="term" value="P:translation"/>
    <property type="evidence" value="ECO:0007669"/>
    <property type="project" value="UniProtKB-UniRule"/>
</dbReference>
<dbReference type="Gene3D" id="3.10.430.100">
    <property type="entry name" value="Ribosomal protein L9, C-terminal domain"/>
    <property type="match status" value="1"/>
</dbReference>
<dbReference type="Gene3D" id="3.40.5.10">
    <property type="entry name" value="Ribosomal protein L9, N-terminal domain"/>
    <property type="match status" value="1"/>
</dbReference>
<dbReference type="HAMAP" id="MF_00503">
    <property type="entry name" value="Ribosomal_bL9"/>
    <property type="match status" value="1"/>
</dbReference>
<dbReference type="InterPro" id="IPR000244">
    <property type="entry name" value="Ribosomal_bL9"/>
</dbReference>
<dbReference type="InterPro" id="IPR009027">
    <property type="entry name" value="Ribosomal_bL9/RNase_H1_N"/>
</dbReference>
<dbReference type="InterPro" id="IPR020594">
    <property type="entry name" value="Ribosomal_bL9_bac/chp"/>
</dbReference>
<dbReference type="InterPro" id="IPR020069">
    <property type="entry name" value="Ribosomal_bL9_C"/>
</dbReference>
<dbReference type="InterPro" id="IPR036791">
    <property type="entry name" value="Ribosomal_bL9_C_sf"/>
</dbReference>
<dbReference type="InterPro" id="IPR020070">
    <property type="entry name" value="Ribosomal_bL9_N"/>
</dbReference>
<dbReference type="InterPro" id="IPR036935">
    <property type="entry name" value="Ribosomal_bL9_N_sf"/>
</dbReference>
<dbReference type="NCBIfam" id="TIGR00158">
    <property type="entry name" value="L9"/>
    <property type="match status" value="1"/>
</dbReference>
<dbReference type="PANTHER" id="PTHR21368">
    <property type="entry name" value="50S RIBOSOMAL PROTEIN L9"/>
    <property type="match status" value="1"/>
</dbReference>
<dbReference type="Pfam" id="PF03948">
    <property type="entry name" value="Ribosomal_L9_C"/>
    <property type="match status" value="1"/>
</dbReference>
<dbReference type="Pfam" id="PF01281">
    <property type="entry name" value="Ribosomal_L9_N"/>
    <property type="match status" value="1"/>
</dbReference>
<dbReference type="SUPFAM" id="SSF55658">
    <property type="entry name" value="L9 N-domain-like"/>
    <property type="match status" value="1"/>
</dbReference>
<dbReference type="SUPFAM" id="SSF55653">
    <property type="entry name" value="Ribosomal protein L9 C-domain"/>
    <property type="match status" value="1"/>
</dbReference>
<dbReference type="PROSITE" id="PS00651">
    <property type="entry name" value="RIBOSOMAL_L9"/>
    <property type="match status" value="1"/>
</dbReference>
<protein>
    <recommendedName>
        <fullName evidence="1">Large ribosomal subunit protein bL9</fullName>
    </recommendedName>
    <alternativeName>
        <fullName evidence="2">50S ribosomal protein L9</fullName>
    </alternativeName>
</protein>
<gene>
    <name evidence="1" type="primary">rplI</name>
    <name type="ordered locus">MYPU_5160</name>
</gene>
<evidence type="ECO:0000255" key="1">
    <source>
        <dbReference type="HAMAP-Rule" id="MF_00503"/>
    </source>
</evidence>
<evidence type="ECO:0000305" key="2"/>
<sequence length="150" mass="17238">MKLILIKDCPSGKANTIVEVSDGYAKNFLIPRKFAIAYTEENAKKLKQKLEQEKLDFSLKTKEFLELKEKLEKLKLTFKLKASLDKNHKLETHHSISAKKLLERLHELGFDLPKHSIEKVHLNLIGINHVNVKLFDKIVAKLTVVIEADV</sequence>
<reference key="1">
    <citation type="journal article" date="2001" name="Nucleic Acids Res.">
        <title>The complete genome sequence of the murine respiratory pathogen Mycoplasma pulmonis.</title>
        <authorList>
            <person name="Chambaud I."/>
            <person name="Heilig R."/>
            <person name="Ferris S."/>
            <person name="Barbe V."/>
            <person name="Samson D."/>
            <person name="Galisson F."/>
            <person name="Moszer I."/>
            <person name="Dybvig K."/>
            <person name="Wroblewski H."/>
            <person name="Viari A."/>
            <person name="Rocha E.P.C."/>
            <person name="Blanchard A."/>
        </authorList>
    </citation>
    <scope>NUCLEOTIDE SEQUENCE [LARGE SCALE GENOMIC DNA]</scope>
    <source>
        <strain>UAB CTIP</strain>
    </source>
</reference>